<comment type="function">
    <text evidence="1">Plays a crucial role in virus assembly into filaments and budding. Early in infection, localizes in the nucleus where it inhibits host cell transcription through direct binding to host chromatin. Later in infection, traffics to the cytoplasm through the action of host CRM1 to associate with inclusion bodies, the site of viral transcription and replication. During virus assembly and budding, acts as a bridge between the nucleocapsid and the lipid bilayer.</text>
</comment>
<comment type="subunit">
    <text evidence="1">Forms dimers. Forms higher-order oligomers. Interacts with glycoprotein G (via N-terminus). Interacts with protein M2-1; this interaction directs the matrix protein localization to cytoplasmic inclusions comprising viral proteins L, N, P, and M2-1 and mediates the matrix protein association with the nucleocapsid. Interacts with host KPNB1; this interaction mediates nuclear import of the matrix protein early during infection. Interacts with host AP3M1; this interaction plays an essential role in trafficking the matrix protein in host cells. Interacts with host CAV1; this interaction probably facilitates viral budding. Interacts with host CFL1; this interaction probably facilitates viral replication. Interacts with host ZNF502; this interaction probably facilitates viral release.</text>
</comment>
<comment type="subcellular location">
    <subcellularLocation>
        <location evidence="1">Virion</location>
    </subcellularLocation>
    <subcellularLocation>
        <location evidence="1">Host cytoplasm</location>
    </subcellularLocation>
    <subcellularLocation>
        <location evidence="1">Host nucleus</location>
    </subcellularLocation>
    <subcellularLocation>
        <location evidence="1">Host cell membrane</location>
        <topology evidence="1">Peripheral membrane protein</topology>
        <orientation evidence="1">Cytoplasmic side</orientation>
    </subcellularLocation>
    <text evidence="1">In the cytoplasm, associates with inclusion bodies. During bud formation, associates at the inner side of the plasma membrane of infected cells.</text>
</comment>
<comment type="PTM">
    <text evidence="1">Phosphorylation is important for oligomerization.</text>
</comment>
<comment type="similarity">
    <text evidence="2">Belongs to the pneumovirinae M protein family.</text>
</comment>
<accession>O42049</accession>
<dbReference type="EMBL" id="AF013254">
    <property type="protein sequence ID" value="AAB82433.1"/>
    <property type="molecule type" value="Genomic_RNA"/>
</dbReference>
<dbReference type="EMBL" id="AF013255">
    <property type="protein sequence ID" value="AAB82444.1"/>
    <property type="molecule type" value="Genomic_RNA"/>
</dbReference>
<dbReference type="RefSeq" id="NP_056860.1">
    <property type="nucleotide sequence ID" value="NC_001781.1"/>
</dbReference>
<dbReference type="SMR" id="O42049"/>
<dbReference type="GeneID" id="1489822"/>
<dbReference type="KEGG" id="vg:1489822"/>
<dbReference type="Proteomes" id="UP000002472">
    <property type="component" value="Segment"/>
</dbReference>
<dbReference type="Proteomes" id="UP000180717">
    <property type="component" value="Genome"/>
</dbReference>
<dbReference type="GO" id="GO:0030430">
    <property type="term" value="C:host cell cytoplasm"/>
    <property type="evidence" value="ECO:0007669"/>
    <property type="project" value="UniProtKB-SubCell"/>
</dbReference>
<dbReference type="GO" id="GO:0042025">
    <property type="term" value="C:host cell nucleus"/>
    <property type="evidence" value="ECO:0007669"/>
    <property type="project" value="UniProtKB-SubCell"/>
</dbReference>
<dbReference type="GO" id="GO:0020002">
    <property type="term" value="C:host cell plasma membrane"/>
    <property type="evidence" value="ECO:0007669"/>
    <property type="project" value="UniProtKB-SubCell"/>
</dbReference>
<dbReference type="GO" id="GO:0016020">
    <property type="term" value="C:membrane"/>
    <property type="evidence" value="ECO:0007669"/>
    <property type="project" value="UniProtKB-KW"/>
</dbReference>
<dbReference type="GO" id="GO:0019031">
    <property type="term" value="C:viral envelope"/>
    <property type="evidence" value="ECO:0007669"/>
    <property type="project" value="InterPro"/>
</dbReference>
<dbReference type="GO" id="GO:0039660">
    <property type="term" value="F:structural constituent of virion"/>
    <property type="evidence" value="ECO:0007669"/>
    <property type="project" value="UniProtKB-KW"/>
</dbReference>
<dbReference type="GO" id="GO:0019068">
    <property type="term" value="P:virion assembly"/>
    <property type="evidence" value="ECO:0007669"/>
    <property type="project" value="InterPro"/>
</dbReference>
<dbReference type="Gene3D" id="2.70.20.30">
    <property type="entry name" value="HRSV-S2 matrix protein, N-terminal domain"/>
    <property type="match status" value="1"/>
</dbReference>
<dbReference type="InterPro" id="IPR055461">
    <property type="entry name" value="Matrix_Pneumo_C"/>
</dbReference>
<dbReference type="InterPro" id="IPR005056">
    <property type="entry name" value="MATRX_N_pneumovirus"/>
</dbReference>
<dbReference type="InterPro" id="IPR043062">
    <property type="entry name" value="Pneu_matrix_N"/>
</dbReference>
<dbReference type="Pfam" id="PF23766">
    <property type="entry name" value="Matrix_Pneumo_C"/>
    <property type="match status" value="1"/>
</dbReference>
<dbReference type="Pfam" id="PF03393">
    <property type="entry name" value="Matrix_Pneumo_N"/>
    <property type="match status" value="1"/>
</dbReference>
<evidence type="ECO:0000250" key="1">
    <source>
        <dbReference type="UniProtKB" id="P0DOE7"/>
    </source>
</evidence>
<evidence type="ECO:0000305" key="2"/>
<proteinExistence type="inferred from homology"/>
<reference key="1">
    <citation type="journal article" date="1997" name="Proc. Natl. Acad. Sci. U.S.A.">
        <title>Respiratory syncytial virus (RSV) SH and G proteins are not essential for viral replication in vitro: clinical evaluation and molecular characterization of a cold-passaged, attenuated RSV subgroup B mutant.</title>
        <authorList>
            <person name="Karron R.A."/>
            <person name="Buonagurio D.A."/>
            <person name="Georgiu A.F."/>
            <person name="Whitehead S.S."/>
            <person name="Adamus J.E."/>
            <person name="Clements-Mann M.L."/>
            <person name="Harris D.O."/>
            <person name="Randolph V.B."/>
            <person name="Udem S.A."/>
            <person name="Murphy B.R."/>
            <person name="Sidhu M.S."/>
        </authorList>
    </citation>
    <scope>NUCLEOTIDE SEQUENCE [GENOMIC RNA]</scope>
</reference>
<name>MATRX_HRSVB</name>
<organism>
    <name type="scientific">Human respiratory syncytial virus B (strain B1)</name>
    <dbReference type="NCBI Taxonomy" id="79692"/>
    <lineage>
        <taxon>Viruses</taxon>
        <taxon>Riboviria</taxon>
        <taxon>Orthornavirae</taxon>
        <taxon>Negarnaviricota</taxon>
        <taxon>Haploviricotina</taxon>
        <taxon>Monjiviricetes</taxon>
        <taxon>Mononegavirales</taxon>
        <taxon>Pneumoviridae</taxon>
        <taxon>Orthopneumovirus</taxon>
        <taxon>Orthopneumovirus hominis</taxon>
    </lineage>
</organism>
<protein>
    <recommendedName>
        <fullName>Matrix protein</fullName>
    </recommendedName>
    <alternativeName>
        <fullName evidence="1">M protein</fullName>
    </alternativeName>
</protein>
<organismHost>
    <name type="scientific">Homo sapiens</name>
    <name type="common">Human</name>
    <dbReference type="NCBI Taxonomy" id="9606"/>
</organismHost>
<feature type="chain" id="PRO_0000365789" description="Matrix protein">
    <location>
        <begin position="1"/>
        <end position="256"/>
    </location>
</feature>
<feature type="region of interest" description="Interaction with M2-1" evidence="1">
    <location>
        <begin position="1"/>
        <end position="110"/>
    </location>
</feature>
<feature type="region of interest" description="Nuclear targeting and binding to host importin KPNB1" evidence="1">
    <location>
        <begin position="110"/>
        <end position="183"/>
    </location>
</feature>
<feature type="short sequence motif" description="Nuclear export signal" evidence="1">
    <location>
        <begin position="194"/>
        <end position="206"/>
    </location>
</feature>
<feature type="modified residue" description="Phosphothreonine" evidence="1">
    <location>
        <position position="205"/>
    </location>
</feature>
<keyword id="KW-1032">Host cell membrane</keyword>
<keyword id="KW-1035">Host cytoplasm</keyword>
<keyword id="KW-1043">Host membrane</keyword>
<keyword id="KW-1048">Host nucleus</keyword>
<keyword id="KW-0945">Host-virus interaction</keyword>
<keyword id="KW-0472">Membrane</keyword>
<keyword id="KW-0597">Phosphoprotein</keyword>
<keyword id="KW-1185">Reference proteome</keyword>
<keyword id="KW-0468">Viral matrix protein</keyword>
<keyword id="KW-0946">Virion</keyword>
<gene>
    <name type="primary">M</name>
</gene>
<sequence>METYVNKLHEGSTYTAAVQYNVLEKDDDPASLTIWVPMFQSSVPADLLIKELASINILVKQISTPKGPSLRVTINSRSAVLAQMPSNFIISANVSLDERSKLAYDVTTPCEIKACSLTCLKVKSMLTTVKDLTMKTFNPTHEIIALCEFENIMTSKRVIIPTYLRPISVKNKDLNSLENIATTEFKNAITNAKIIPYAGLVLVITVTDNKGAFKYIKPQSQFIVDLGAYLEKESIYYVTTNWKHTATRFSIKPLED</sequence>